<comment type="function">
    <text evidence="1">Required for the insertion and/or proper folding and/or complex formation of integral membrane proteins into the membrane. Involved in integration of membrane proteins that insert both dependently and independently of the Sec translocase complex, as well as at least some lipoproteins. Aids folding of multispanning membrane proteins.</text>
</comment>
<comment type="subunit">
    <text evidence="1">Interacts with the Sec translocase complex via SecD. Specifically interacts with transmembrane segments of nascent integral membrane proteins during membrane integration.</text>
</comment>
<comment type="subcellular location">
    <subcellularLocation>
        <location evidence="1">Cell inner membrane</location>
        <topology evidence="1">Multi-pass membrane protein</topology>
    </subcellularLocation>
</comment>
<comment type="similarity">
    <text evidence="1">Belongs to the OXA1/ALB3/YidC family. Type 1 subfamily.</text>
</comment>
<name>YIDC_XYLFA</name>
<evidence type="ECO:0000255" key="1">
    <source>
        <dbReference type="HAMAP-Rule" id="MF_01810"/>
    </source>
</evidence>
<dbReference type="EMBL" id="AE003849">
    <property type="protein sequence ID" value="AAF85565.1"/>
    <property type="molecule type" value="Genomic_DNA"/>
</dbReference>
<dbReference type="PIR" id="H82516">
    <property type="entry name" value="H82516"/>
</dbReference>
<dbReference type="RefSeq" id="WP_010895194.1">
    <property type="nucleotide sequence ID" value="NC_002488.3"/>
</dbReference>
<dbReference type="SMR" id="Q9P9U1"/>
<dbReference type="STRING" id="160492.XF_2780"/>
<dbReference type="KEGG" id="xfa:XF_2780"/>
<dbReference type="eggNOG" id="COG0706">
    <property type="taxonomic scope" value="Bacteria"/>
</dbReference>
<dbReference type="HOGENOM" id="CLU_016535_3_0_6"/>
<dbReference type="Proteomes" id="UP000000812">
    <property type="component" value="Chromosome"/>
</dbReference>
<dbReference type="GO" id="GO:0005886">
    <property type="term" value="C:plasma membrane"/>
    <property type="evidence" value="ECO:0007669"/>
    <property type="project" value="UniProtKB-SubCell"/>
</dbReference>
<dbReference type="GO" id="GO:0032977">
    <property type="term" value="F:membrane insertase activity"/>
    <property type="evidence" value="ECO:0007669"/>
    <property type="project" value="InterPro"/>
</dbReference>
<dbReference type="GO" id="GO:0051205">
    <property type="term" value="P:protein insertion into membrane"/>
    <property type="evidence" value="ECO:0007669"/>
    <property type="project" value="TreeGrafter"/>
</dbReference>
<dbReference type="GO" id="GO:0015031">
    <property type="term" value="P:protein transport"/>
    <property type="evidence" value="ECO:0007669"/>
    <property type="project" value="UniProtKB-KW"/>
</dbReference>
<dbReference type="CDD" id="cd20070">
    <property type="entry name" value="5TM_YidC_Alb3"/>
    <property type="match status" value="1"/>
</dbReference>
<dbReference type="CDD" id="cd19961">
    <property type="entry name" value="EcYidC-like_peri"/>
    <property type="match status" value="1"/>
</dbReference>
<dbReference type="Gene3D" id="2.70.98.90">
    <property type="match status" value="1"/>
</dbReference>
<dbReference type="HAMAP" id="MF_01810">
    <property type="entry name" value="YidC_type1"/>
    <property type="match status" value="1"/>
</dbReference>
<dbReference type="InterPro" id="IPR019998">
    <property type="entry name" value="Membr_insert_YidC"/>
</dbReference>
<dbReference type="InterPro" id="IPR028053">
    <property type="entry name" value="Membr_insert_YidC_N"/>
</dbReference>
<dbReference type="InterPro" id="IPR001708">
    <property type="entry name" value="YidC/ALB3/OXA1/COX18"/>
</dbReference>
<dbReference type="InterPro" id="IPR028055">
    <property type="entry name" value="YidC/Oxa/ALB_C"/>
</dbReference>
<dbReference type="InterPro" id="IPR047196">
    <property type="entry name" value="YidC_ALB_C"/>
</dbReference>
<dbReference type="InterPro" id="IPR038221">
    <property type="entry name" value="YidC_periplasmic_sf"/>
</dbReference>
<dbReference type="NCBIfam" id="NF002352">
    <property type="entry name" value="PRK01318.1-3"/>
    <property type="match status" value="1"/>
</dbReference>
<dbReference type="NCBIfam" id="TIGR03593">
    <property type="entry name" value="yidC_nterm"/>
    <property type="match status" value="1"/>
</dbReference>
<dbReference type="NCBIfam" id="TIGR03592">
    <property type="entry name" value="yidC_oxa1_cterm"/>
    <property type="match status" value="1"/>
</dbReference>
<dbReference type="PANTHER" id="PTHR12428:SF65">
    <property type="entry name" value="CYTOCHROME C OXIDASE ASSEMBLY PROTEIN COX18, MITOCHONDRIAL"/>
    <property type="match status" value="1"/>
</dbReference>
<dbReference type="PANTHER" id="PTHR12428">
    <property type="entry name" value="OXA1"/>
    <property type="match status" value="1"/>
</dbReference>
<dbReference type="Pfam" id="PF02096">
    <property type="entry name" value="60KD_IMP"/>
    <property type="match status" value="1"/>
</dbReference>
<dbReference type="Pfam" id="PF14849">
    <property type="entry name" value="YidC_periplas"/>
    <property type="match status" value="1"/>
</dbReference>
<dbReference type="PRINTS" id="PR00701">
    <property type="entry name" value="60KDINNERMP"/>
</dbReference>
<dbReference type="PRINTS" id="PR01900">
    <property type="entry name" value="YIDCPROTEIN"/>
</dbReference>
<protein>
    <recommendedName>
        <fullName evidence="1">Membrane protein insertase YidC</fullName>
    </recommendedName>
    <alternativeName>
        <fullName evidence="1">Foldase YidC</fullName>
    </alternativeName>
    <alternativeName>
        <fullName evidence="1">Membrane integrase YidC</fullName>
    </alternativeName>
    <alternativeName>
        <fullName evidence="1">Membrane protein YidC</fullName>
    </alternativeName>
</protein>
<gene>
    <name evidence="1" type="primary">yidC</name>
    <name type="ordered locus">XF_2780</name>
</gene>
<organism>
    <name type="scientific">Xylella fastidiosa (strain 9a5c)</name>
    <dbReference type="NCBI Taxonomy" id="160492"/>
    <lineage>
        <taxon>Bacteria</taxon>
        <taxon>Pseudomonadati</taxon>
        <taxon>Pseudomonadota</taxon>
        <taxon>Gammaproteobacteria</taxon>
        <taxon>Lysobacterales</taxon>
        <taxon>Lysobacteraceae</taxon>
        <taxon>Xylella</taxon>
    </lineage>
</organism>
<accession>Q9P9U1</accession>
<proteinExistence type="inferred from homology"/>
<sequence length="565" mass="64141">MNQTRVLLIFSWLTVATLLWMDWGKNKNETLEISASQNLGVDSNLELEHAVPQINAGAVPVQKDSQLIAVAPKVPVINVKTDVLQLKLDGFSVLAADLLRFPQSKDRGAKPIKLLTDDPNYPYSATTGWVSQSNSPVPNLSTFLPEQPGVSYKLANDQDRLVVPFVWTAANGVSIRRTFTFERGRYAILIRDEIRNGGETPWNAYVFRKLSRVPIPNILNRAMTNPDSFSFNGAVWYSEKGGYERRAFKDYMNDGGLNREIGGGWIALLQHHFFTAWIPQKDQASLYLLAQNGSRDIAELRGPAFTVAPGQSTTTEARLWVGPKLVEQITKEHVKGLDRVVDYSRFQLMALIGQGLFWILSHLNSLLHNWGWAIVGLVVLLRIAMYPLSAAQYKSAAKMRKFQPRLQQLKERYGEDRQKFQQAMMELYKKEKINPMGGCFPILIQMPIFFALYWVLVESVELRQAPWLGWIQDLTTRDPYFILPLLNIVIMWATQKLTPTPAGMDPIAGKMMQVMPLIFGVMMAFVPSGLALYWVINGGLNLLIQWWMIRQHADFSRKRSRGNIK</sequence>
<feature type="chain" id="PRO_0000124773" description="Membrane protein insertase YidC">
    <location>
        <begin position="1"/>
        <end position="565"/>
    </location>
</feature>
<feature type="transmembrane region" description="Helical" evidence="1">
    <location>
        <begin position="6"/>
        <end position="26"/>
    </location>
</feature>
<feature type="transmembrane region" description="Helical" evidence="1">
    <location>
        <begin position="348"/>
        <end position="368"/>
    </location>
</feature>
<feature type="transmembrane region" description="Helical" evidence="1">
    <location>
        <begin position="370"/>
        <end position="390"/>
    </location>
</feature>
<feature type="transmembrane region" description="Helical" evidence="1">
    <location>
        <begin position="437"/>
        <end position="457"/>
    </location>
</feature>
<feature type="transmembrane region" description="Helical" evidence="1">
    <location>
        <begin position="479"/>
        <end position="499"/>
    </location>
</feature>
<feature type="transmembrane region" description="Helical" evidence="1">
    <location>
        <begin position="516"/>
        <end position="536"/>
    </location>
</feature>
<keyword id="KW-0997">Cell inner membrane</keyword>
<keyword id="KW-1003">Cell membrane</keyword>
<keyword id="KW-0143">Chaperone</keyword>
<keyword id="KW-0472">Membrane</keyword>
<keyword id="KW-0653">Protein transport</keyword>
<keyword id="KW-0812">Transmembrane</keyword>
<keyword id="KW-1133">Transmembrane helix</keyword>
<keyword id="KW-0813">Transport</keyword>
<reference key="1">
    <citation type="journal article" date="2000" name="Nature">
        <title>The genome sequence of the plant pathogen Xylella fastidiosa.</title>
        <authorList>
            <person name="Simpson A.J.G."/>
            <person name="Reinach F.C."/>
            <person name="Arruda P."/>
            <person name="Abreu F.A."/>
            <person name="Acencio M."/>
            <person name="Alvarenga R."/>
            <person name="Alves L.M.C."/>
            <person name="Araya J.E."/>
            <person name="Baia G.S."/>
            <person name="Baptista C.S."/>
            <person name="Barros M.H."/>
            <person name="Bonaccorsi E.D."/>
            <person name="Bordin S."/>
            <person name="Bove J.M."/>
            <person name="Briones M.R.S."/>
            <person name="Bueno M.R.P."/>
            <person name="Camargo A.A."/>
            <person name="Camargo L.E.A."/>
            <person name="Carraro D.M."/>
            <person name="Carrer H."/>
            <person name="Colauto N.B."/>
            <person name="Colombo C."/>
            <person name="Costa F.F."/>
            <person name="Costa M.C.R."/>
            <person name="Costa-Neto C.M."/>
            <person name="Coutinho L.L."/>
            <person name="Cristofani M."/>
            <person name="Dias-Neto E."/>
            <person name="Docena C."/>
            <person name="El-Dorry H."/>
            <person name="Facincani A.P."/>
            <person name="Ferreira A.J.S."/>
            <person name="Ferreira V.C.A."/>
            <person name="Ferro J.A."/>
            <person name="Fraga J.S."/>
            <person name="Franca S.C."/>
            <person name="Franco M.C."/>
            <person name="Frohme M."/>
            <person name="Furlan L.R."/>
            <person name="Garnier M."/>
            <person name="Goldman G.H."/>
            <person name="Goldman M.H.S."/>
            <person name="Gomes S.L."/>
            <person name="Gruber A."/>
            <person name="Ho P.L."/>
            <person name="Hoheisel J.D."/>
            <person name="Junqueira M.L."/>
            <person name="Kemper E.L."/>
            <person name="Kitajima J.P."/>
            <person name="Krieger J.E."/>
            <person name="Kuramae E.E."/>
            <person name="Laigret F."/>
            <person name="Lambais M.R."/>
            <person name="Leite L.C.C."/>
            <person name="Lemos E.G.M."/>
            <person name="Lemos M.V.F."/>
            <person name="Lopes S.A."/>
            <person name="Lopes C.R."/>
            <person name="Machado J.A."/>
            <person name="Machado M.A."/>
            <person name="Madeira A.M.B.N."/>
            <person name="Madeira H.M.F."/>
            <person name="Marino C.L."/>
            <person name="Marques M.V."/>
            <person name="Martins E.A.L."/>
            <person name="Martins E.M.F."/>
            <person name="Matsukuma A.Y."/>
            <person name="Menck C.F.M."/>
            <person name="Miracca E.C."/>
            <person name="Miyaki C.Y."/>
            <person name="Monteiro-Vitorello C.B."/>
            <person name="Moon D.H."/>
            <person name="Nagai M.A."/>
            <person name="Nascimento A.L.T.O."/>
            <person name="Netto L.E.S."/>
            <person name="Nhani A. Jr."/>
            <person name="Nobrega F.G."/>
            <person name="Nunes L.R."/>
            <person name="Oliveira M.A."/>
            <person name="de Oliveira M.C."/>
            <person name="de Oliveira R.C."/>
            <person name="Palmieri D.A."/>
            <person name="Paris A."/>
            <person name="Peixoto B.R."/>
            <person name="Pereira G.A.G."/>
            <person name="Pereira H.A. Jr."/>
            <person name="Pesquero J.B."/>
            <person name="Quaggio R.B."/>
            <person name="Roberto P.G."/>
            <person name="Rodrigues V."/>
            <person name="de Rosa A.J.M."/>
            <person name="de Rosa V.E. Jr."/>
            <person name="de Sa R.G."/>
            <person name="Santelli R.V."/>
            <person name="Sawasaki H.E."/>
            <person name="da Silva A.C.R."/>
            <person name="da Silva A.M."/>
            <person name="da Silva F.R."/>
            <person name="Silva W.A. Jr."/>
            <person name="da Silveira J.F."/>
            <person name="Silvestri M.L.Z."/>
            <person name="Siqueira W.J."/>
            <person name="de Souza A.A."/>
            <person name="de Souza A.P."/>
            <person name="Terenzi M.F."/>
            <person name="Truffi D."/>
            <person name="Tsai S.M."/>
            <person name="Tsuhako M.H."/>
            <person name="Vallada H."/>
            <person name="Van Sluys M.A."/>
            <person name="Verjovski-Almeida S."/>
            <person name="Vettore A.L."/>
            <person name="Zago M.A."/>
            <person name="Zatz M."/>
            <person name="Meidanis J."/>
            <person name="Setubal J.C."/>
        </authorList>
    </citation>
    <scope>NUCLEOTIDE SEQUENCE [LARGE SCALE GENOMIC DNA]</scope>
    <source>
        <strain>9a5c</strain>
    </source>
</reference>